<keyword id="KW-0238">DNA-binding</keyword>
<keyword id="KW-0269">Exonuclease</keyword>
<keyword id="KW-0378">Hydrolase</keyword>
<keyword id="KW-0540">Nuclease</keyword>
<keyword id="KW-1185">Reference proteome</keyword>
<feature type="chain" id="PRO_0000101282" description="5'-3' exonuclease">
    <location>
        <begin position="1"/>
        <end position="296"/>
    </location>
</feature>
<feature type="domain" description="5'-3' exonuclease" evidence="1">
    <location>
        <begin position="175"/>
        <end position="262"/>
    </location>
</feature>
<evidence type="ECO:0000255" key="1"/>
<evidence type="ECO:0000269" key="2">
    <source>
    </source>
</evidence>
<evidence type="ECO:0000269" key="3">
    <source>
    </source>
</evidence>
<dbReference type="EC" id="3.1.11.-"/>
<dbReference type="EMBL" id="L77246">
    <property type="protein sequence ID" value="AAA96617.1"/>
    <property type="molecule type" value="Genomic_DNA"/>
</dbReference>
<dbReference type="EMBL" id="AL009126">
    <property type="protein sequence ID" value="CAB14118.1"/>
    <property type="molecule type" value="Genomic_DNA"/>
</dbReference>
<dbReference type="PIR" id="H69933">
    <property type="entry name" value="H69933"/>
</dbReference>
<dbReference type="SMR" id="P54161"/>
<dbReference type="FunCoup" id="P54161">
    <property type="interactions" value="159"/>
</dbReference>
<dbReference type="STRING" id="224308.BSU22010"/>
<dbReference type="PaxDb" id="224308-BSU22010"/>
<dbReference type="EnsemblBacteria" id="CAB14118">
    <property type="protein sequence ID" value="CAB14118"/>
    <property type="gene ID" value="BSU_22010"/>
</dbReference>
<dbReference type="GeneID" id="939070"/>
<dbReference type="KEGG" id="bsu:BSU22010"/>
<dbReference type="PATRIC" id="fig|224308.179.peg.2403"/>
<dbReference type="eggNOG" id="COG0258">
    <property type="taxonomic scope" value="Bacteria"/>
</dbReference>
<dbReference type="InParanoid" id="P54161"/>
<dbReference type="OrthoDB" id="9806424at2"/>
<dbReference type="PhylomeDB" id="P54161"/>
<dbReference type="BioCyc" id="BSUB:BSU22010-MONOMER"/>
<dbReference type="Proteomes" id="UP000001570">
    <property type="component" value="Chromosome"/>
</dbReference>
<dbReference type="GO" id="GO:0008409">
    <property type="term" value="F:5'-3' exonuclease activity"/>
    <property type="evidence" value="ECO:0007669"/>
    <property type="project" value="InterPro"/>
</dbReference>
<dbReference type="GO" id="GO:0017108">
    <property type="term" value="F:5'-flap endonuclease activity"/>
    <property type="evidence" value="ECO:0007669"/>
    <property type="project" value="InterPro"/>
</dbReference>
<dbReference type="GO" id="GO:0003677">
    <property type="term" value="F:DNA binding"/>
    <property type="evidence" value="ECO:0007669"/>
    <property type="project" value="UniProtKB-KW"/>
</dbReference>
<dbReference type="GO" id="GO:0033567">
    <property type="term" value="P:DNA replication, Okazaki fragment processing"/>
    <property type="evidence" value="ECO:0007669"/>
    <property type="project" value="InterPro"/>
</dbReference>
<dbReference type="CDD" id="cd09898">
    <property type="entry name" value="H3TH_53EXO"/>
    <property type="match status" value="1"/>
</dbReference>
<dbReference type="CDD" id="cd09859">
    <property type="entry name" value="PIN_53EXO"/>
    <property type="match status" value="1"/>
</dbReference>
<dbReference type="FunFam" id="1.10.150.20:FF:000003">
    <property type="entry name" value="DNA polymerase I"/>
    <property type="match status" value="1"/>
</dbReference>
<dbReference type="Gene3D" id="1.10.150.20">
    <property type="entry name" value="5' to 3' exonuclease, C-terminal subdomain"/>
    <property type="match status" value="1"/>
</dbReference>
<dbReference type="Gene3D" id="3.40.50.1010">
    <property type="entry name" value="5'-nuclease"/>
    <property type="match status" value="1"/>
</dbReference>
<dbReference type="InterPro" id="IPR020046">
    <property type="entry name" value="5-3_exonucl_a-hlix_arch_N"/>
</dbReference>
<dbReference type="InterPro" id="IPR002421">
    <property type="entry name" value="5-3_exonuclease"/>
</dbReference>
<dbReference type="InterPro" id="IPR036279">
    <property type="entry name" value="5-3_exonuclease_C_sf"/>
</dbReference>
<dbReference type="InterPro" id="IPR020045">
    <property type="entry name" value="DNA_polI_H3TH"/>
</dbReference>
<dbReference type="InterPro" id="IPR038969">
    <property type="entry name" value="FEN"/>
</dbReference>
<dbReference type="InterPro" id="IPR008918">
    <property type="entry name" value="HhH2"/>
</dbReference>
<dbReference type="InterPro" id="IPR029060">
    <property type="entry name" value="PIN-like_dom_sf"/>
</dbReference>
<dbReference type="PANTHER" id="PTHR42646:SF2">
    <property type="entry name" value="5'-3' EXONUCLEASE FAMILY PROTEIN"/>
    <property type="match status" value="1"/>
</dbReference>
<dbReference type="PANTHER" id="PTHR42646">
    <property type="entry name" value="FLAP ENDONUCLEASE XNI"/>
    <property type="match status" value="1"/>
</dbReference>
<dbReference type="Pfam" id="PF01367">
    <property type="entry name" value="5_3_exonuc"/>
    <property type="match status" value="1"/>
</dbReference>
<dbReference type="Pfam" id="PF02739">
    <property type="entry name" value="5_3_exonuc_N"/>
    <property type="match status" value="1"/>
</dbReference>
<dbReference type="SMART" id="SM00475">
    <property type="entry name" value="53EXOc"/>
    <property type="match status" value="1"/>
</dbReference>
<dbReference type="SMART" id="SM00279">
    <property type="entry name" value="HhH2"/>
    <property type="match status" value="1"/>
</dbReference>
<dbReference type="SUPFAM" id="SSF47807">
    <property type="entry name" value="5' to 3' exonuclease, C-terminal subdomain"/>
    <property type="match status" value="1"/>
</dbReference>
<dbReference type="SUPFAM" id="SSF88723">
    <property type="entry name" value="PIN domain-like"/>
    <property type="match status" value="1"/>
</dbReference>
<reference key="1">
    <citation type="journal article" date="1996" name="Microbiology">
        <title>Organization of the Bacillus subtilis 168 chromosome between kdg and the attachment site of the SP beta prophage: use of long accurate PCR and yeast artificial chromosomes for sequencing.</title>
        <authorList>
            <person name="Capuano V."/>
            <person name="Galleron N."/>
            <person name="Pujic P."/>
            <person name="Sorokin A."/>
            <person name="Ehrlich S.D."/>
        </authorList>
    </citation>
    <scope>NUCLEOTIDE SEQUENCE [GENOMIC DNA]</scope>
    <source>
        <strain>168 / Marburg / ATCC 6051 / DSM 10 / JCM 1465 / NBRC 13719 / NCIMB 3610 / NRRL NRS-744 / VKM B-501</strain>
    </source>
</reference>
<reference key="2">
    <citation type="journal article" date="1997" name="Nature">
        <title>The complete genome sequence of the Gram-positive bacterium Bacillus subtilis.</title>
        <authorList>
            <person name="Kunst F."/>
            <person name="Ogasawara N."/>
            <person name="Moszer I."/>
            <person name="Albertini A.M."/>
            <person name="Alloni G."/>
            <person name="Azevedo V."/>
            <person name="Bertero M.G."/>
            <person name="Bessieres P."/>
            <person name="Bolotin A."/>
            <person name="Borchert S."/>
            <person name="Borriss R."/>
            <person name="Boursier L."/>
            <person name="Brans A."/>
            <person name="Braun M."/>
            <person name="Brignell S.C."/>
            <person name="Bron S."/>
            <person name="Brouillet S."/>
            <person name="Bruschi C.V."/>
            <person name="Caldwell B."/>
            <person name="Capuano V."/>
            <person name="Carter N.M."/>
            <person name="Choi S.-K."/>
            <person name="Codani J.-J."/>
            <person name="Connerton I.F."/>
            <person name="Cummings N.J."/>
            <person name="Daniel R.A."/>
            <person name="Denizot F."/>
            <person name="Devine K.M."/>
            <person name="Duesterhoeft A."/>
            <person name="Ehrlich S.D."/>
            <person name="Emmerson P.T."/>
            <person name="Entian K.-D."/>
            <person name="Errington J."/>
            <person name="Fabret C."/>
            <person name="Ferrari E."/>
            <person name="Foulger D."/>
            <person name="Fritz C."/>
            <person name="Fujita M."/>
            <person name="Fujita Y."/>
            <person name="Fuma S."/>
            <person name="Galizzi A."/>
            <person name="Galleron N."/>
            <person name="Ghim S.-Y."/>
            <person name="Glaser P."/>
            <person name="Goffeau A."/>
            <person name="Golightly E.J."/>
            <person name="Grandi G."/>
            <person name="Guiseppi G."/>
            <person name="Guy B.J."/>
            <person name="Haga K."/>
            <person name="Haiech J."/>
            <person name="Harwood C.R."/>
            <person name="Henaut A."/>
            <person name="Hilbert H."/>
            <person name="Holsappel S."/>
            <person name="Hosono S."/>
            <person name="Hullo M.-F."/>
            <person name="Itaya M."/>
            <person name="Jones L.-M."/>
            <person name="Joris B."/>
            <person name="Karamata D."/>
            <person name="Kasahara Y."/>
            <person name="Klaerr-Blanchard M."/>
            <person name="Klein C."/>
            <person name="Kobayashi Y."/>
            <person name="Koetter P."/>
            <person name="Koningstein G."/>
            <person name="Krogh S."/>
            <person name="Kumano M."/>
            <person name="Kurita K."/>
            <person name="Lapidus A."/>
            <person name="Lardinois S."/>
            <person name="Lauber J."/>
            <person name="Lazarevic V."/>
            <person name="Lee S.-M."/>
            <person name="Levine A."/>
            <person name="Liu H."/>
            <person name="Masuda S."/>
            <person name="Mauel C."/>
            <person name="Medigue C."/>
            <person name="Medina N."/>
            <person name="Mellado R.P."/>
            <person name="Mizuno M."/>
            <person name="Moestl D."/>
            <person name="Nakai S."/>
            <person name="Noback M."/>
            <person name="Noone D."/>
            <person name="O'Reilly M."/>
            <person name="Ogawa K."/>
            <person name="Ogiwara A."/>
            <person name="Oudega B."/>
            <person name="Park S.-H."/>
            <person name="Parro V."/>
            <person name="Pohl T.M."/>
            <person name="Portetelle D."/>
            <person name="Porwollik S."/>
            <person name="Prescott A.M."/>
            <person name="Presecan E."/>
            <person name="Pujic P."/>
            <person name="Purnelle B."/>
            <person name="Rapoport G."/>
            <person name="Rey M."/>
            <person name="Reynolds S."/>
            <person name="Rieger M."/>
            <person name="Rivolta C."/>
            <person name="Rocha E."/>
            <person name="Roche B."/>
            <person name="Rose M."/>
            <person name="Sadaie Y."/>
            <person name="Sato T."/>
            <person name="Scanlan E."/>
            <person name="Schleich S."/>
            <person name="Schroeter R."/>
            <person name="Scoffone F."/>
            <person name="Sekiguchi J."/>
            <person name="Sekowska A."/>
            <person name="Seror S.J."/>
            <person name="Serror P."/>
            <person name="Shin B.-S."/>
            <person name="Soldo B."/>
            <person name="Sorokin A."/>
            <person name="Tacconi E."/>
            <person name="Takagi T."/>
            <person name="Takahashi H."/>
            <person name="Takemaru K."/>
            <person name="Takeuchi M."/>
            <person name="Tamakoshi A."/>
            <person name="Tanaka T."/>
            <person name="Terpstra P."/>
            <person name="Tognoni A."/>
            <person name="Tosato V."/>
            <person name="Uchiyama S."/>
            <person name="Vandenbol M."/>
            <person name="Vannier F."/>
            <person name="Vassarotti A."/>
            <person name="Viari A."/>
            <person name="Wambutt R."/>
            <person name="Wedler E."/>
            <person name="Wedler H."/>
            <person name="Weitzenegger T."/>
            <person name="Winters P."/>
            <person name="Wipat A."/>
            <person name="Yamamoto H."/>
            <person name="Yamane K."/>
            <person name="Yasumoto K."/>
            <person name="Yata K."/>
            <person name="Yoshida K."/>
            <person name="Yoshikawa H.-F."/>
            <person name="Zumstein E."/>
            <person name="Yoshikawa H."/>
            <person name="Danchin A."/>
        </authorList>
    </citation>
    <scope>NUCLEOTIDE SEQUENCE [LARGE SCALE GENOMIC DNA]</scope>
    <source>
        <strain>168</strain>
    </source>
</reference>
<reference key="3">
    <citation type="journal article" date="2007" name="J. Bacteriol.">
        <title>Essential bacterial functions encoded by gene pairs.</title>
        <authorList>
            <person name="Thomaides H.B."/>
            <person name="Davison E.J."/>
            <person name="Burston L."/>
            <person name="Johnson H."/>
            <person name="Brown D.R."/>
            <person name="Hunt A.C."/>
            <person name="Errington J."/>
            <person name="Czaplewski L."/>
        </authorList>
    </citation>
    <scope>FUNCTION AS AN EXONUCLEASE</scope>
</reference>
<reference key="4">
    <citation type="journal article" date="2007" name="J. Bacteriol.">
        <title>Reassessment of the in vivo functions of DNA polymerase I and RNase H in bacterial cell growth.</title>
        <authorList>
            <person name="Fukushima S."/>
            <person name="Itaya M."/>
            <person name="Kato H."/>
            <person name="Ogasawara N."/>
            <person name="Yoshikawa H."/>
        </authorList>
    </citation>
    <scope>FUNCTION AS AN EXONUCLEASE</scope>
    <source>
        <strain>168</strain>
    </source>
</reference>
<proteinExistence type="evidence at protein level"/>
<sequence>MNNNKLLLVDGMALLFRAFFATAVHRNFMINDSGVPTNGVNGFLKHLITAVETFQPTHVVCCWDMGSKTYRNDLFQDYKANRSAPPVELIPQFDLAKEAAAELGIMNIGFAGYEADDCIGTLADLFANEADITVVTGDRDLLQLLTDKVSVALLQKGIGNYKVYTKETFYEETGVMPKALIDIKALMGDSSDNYPGVKGIGEKTAYKLIREYETIDRLLENLSLLPKGQQGKIQQGLSDLEMSRKLAEIHCSVPLACTLKDALFTLQMEQAADMLRRHQIKGIERMLEKLNAREIV</sequence>
<name>EX53_BACSU</name>
<accession>P54161</accession>
<protein>
    <recommendedName>
        <fullName>5'-3' exonuclease</fullName>
        <ecNumber>3.1.11.-</ecNumber>
    </recommendedName>
</protein>
<comment type="function">
    <text evidence="2 3">5'-3' exonuclease acting preferentially on double-stranded DNA.</text>
</comment>
<organism>
    <name type="scientific">Bacillus subtilis (strain 168)</name>
    <dbReference type="NCBI Taxonomy" id="224308"/>
    <lineage>
        <taxon>Bacteria</taxon>
        <taxon>Bacillati</taxon>
        <taxon>Bacillota</taxon>
        <taxon>Bacilli</taxon>
        <taxon>Bacillales</taxon>
        <taxon>Bacillaceae</taxon>
        <taxon>Bacillus</taxon>
    </lineage>
</organism>
<gene>
    <name type="primary">ypcP</name>
    <name type="ordered locus">BSU22010</name>
</gene>